<dbReference type="EC" id="1.4.3.2" evidence="1"/>
<dbReference type="EMBL" id="GU220069">
    <property type="protein sequence ID" value="ADA58360.1"/>
    <property type="molecule type" value="mRNA"/>
</dbReference>
<dbReference type="SMR" id="D2KKB4"/>
<dbReference type="GO" id="GO:0001716">
    <property type="term" value="F:L-amino-acid oxidase activity"/>
    <property type="evidence" value="ECO:0007669"/>
    <property type="project" value="UniProtKB-EC"/>
</dbReference>
<dbReference type="GO" id="GO:0090729">
    <property type="term" value="F:toxin activity"/>
    <property type="evidence" value="ECO:0007669"/>
    <property type="project" value="UniProtKB-KW"/>
</dbReference>
<reference key="1">
    <citation type="journal article" date="2010" name="FEBS J.">
        <title>A new highly toxic protein isolated from the death cap Amanita phalloides is an L-amino acid oxidase.</title>
        <authorList>
            <person name="Stasyk T."/>
            <person name="Lutsik-Kordovsky M."/>
            <person name="Wernstedt C."/>
            <person name="Antonyuk V."/>
            <person name="Klyuchivska O."/>
            <person name="Souchelnytskyi S."/>
            <person name="Hellman U."/>
            <person name="Stoika R."/>
        </authorList>
    </citation>
    <scope>NUCLEOTIDE SEQUENCE [MRNA]</scope>
    <scope>PARTIAL PROTEIN SEQUENCE</scope>
    <scope>CATALYTIC ACTIVITY</scope>
    <scope>FUNCTION</scope>
    <source>
        <tissue>Fruiting body</tissue>
    </source>
</reference>
<evidence type="ECO:0000269" key="1">
    <source>
    </source>
</evidence>
<evidence type="ECO:0000303" key="2">
    <source>
    </source>
</evidence>
<evidence type="ECO:0000305" key="3"/>
<comment type="function">
    <text evidence="1">Cytotoxic L-amino acid oxidase with high oxidase activity towards DL-methionine and L-methionine, L-phenylalanine, DL-norleucine, L-isoleucine, L-arginine, L-tyrosine, and DL-leucine. Shows relatively low activity towards DL-lysine and L-lysine, DL-asparagine, DL-valine, L-histidine, DL-threonine, DL-tryptophan, and L-glutamic acid; and no activity towards L-cysteine, L-glycine, L-proline, L-oxyproline, DL-serine, and DL-aspartic acid. Does not use benzylamine, ethanolamine, diethylamine, meta- and para-phenylendiamine, ortho-, meta- and para-aminophenols, or putrescin as a substrate. Acts as a toxin by inducing chromatin condensation, as well as DNA and nucleus fragmentation, which are typical for apoptosis (PubMed:20121947). Probably induces cell damage indirectly via the generation of free radicals and oxidant agents that can trigger cell impairment and apoptosis by a caspase-independent pathway (PubMed:20121947).</text>
</comment>
<comment type="catalytic activity">
    <reaction evidence="1">
        <text>an L-alpha-amino acid + O2 + H2O = a 2-oxocarboxylate + H2O2 + NH4(+)</text>
        <dbReference type="Rhea" id="RHEA:13781"/>
        <dbReference type="ChEBI" id="CHEBI:15377"/>
        <dbReference type="ChEBI" id="CHEBI:15379"/>
        <dbReference type="ChEBI" id="CHEBI:16240"/>
        <dbReference type="ChEBI" id="CHEBI:28938"/>
        <dbReference type="ChEBI" id="CHEBI:35179"/>
        <dbReference type="ChEBI" id="CHEBI:59869"/>
        <dbReference type="EC" id="1.4.3.2"/>
    </reaction>
</comment>
<comment type="cofactor">
    <cofactor evidence="3">
        <name>FAD</name>
        <dbReference type="ChEBI" id="CHEBI:57692"/>
    </cofactor>
</comment>
<comment type="miscellaneous">
    <text evidence="1">Ascorbic acid inhibits the cytotoxic effect caused by toxophallin (PubMed:20121947). The mechanisms of such inhibition could be based on inactivating the H(2)O(2) that appears as a result of the amine oxidase reaction and is toxic for cells (PubMed:20121947).</text>
</comment>
<comment type="similarity">
    <text evidence="3">Belongs to the flavin monoamine oxidase family.</text>
</comment>
<accession>D2KKB4</accession>
<protein>
    <recommendedName>
        <fullName evidence="2">Cytotoxic L-amino-acid oxidase</fullName>
        <ecNumber evidence="1">1.4.3.2</ecNumber>
    </recommendedName>
    <alternativeName>
        <fullName evidence="2">Toxophallin</fullName>
    </alternativeName>
</protein>
<proteinExistence type="evidence at protein level"/>
<name>TOXPH_AMAPH</name>
<keyword id="KW-0903">Direct protein sequencing</keyword>
<keyword id="KW-0274">FAD</keyword>
<keyword id="KW-0285">Flavoprotein</keyword>
<keyword id="KW-0560">Oxidoreductase</keyword>
<keyword id="KW-0800">Toxin</keyword>
<organism>
    <name type="scientific">Amanita phalloides</name>
    <name type="common">Death cap</name>
    <dbReference type="NCBI Taxonomy" id="67723"/>
    <lineage>
        <taxon>Eukaryota</taxon>
        <taxon>Fungi</taxon>
        <taxon>Dikarya</taxon>
        <taxon>Basidiomycota</taxon>
        <taxon>Agaricomycotina</taxon>
        <taxon>Agaricomycetes</taxon>
        <taxon>Agaricomycetidae</taxon>
        <taxon>Agaricales</taxon>
        <taxon>Pluteineae</taxon>
        <taxon>Amanitaceae</taxon>
        <taxon>Amanita</taxon>
    </lineage>
</organism>
<sequence>RVFHLFDYPPLNTGDLQLKAKIKPFIFTSNNSFLSYNDVTVKHNDVPAGDPFKASAVIKDTNPNPYIAAGVTAILNDVLGRFAVPLMNDLKTGKTDGWDLMMKYDKHSTRSYMALAYTPSDHLNLPKKPLPTDVINWLETFDK</sequence>
<feature type="chain" id="PRO_0000443561" description="Cytotoxic L-amino-acid oxidase">
    <location>
        <begin position="1" status="less than"/>
        <end position="143" status="greater than"/>
    </location>
</feature>
<feature type="non-terminal residue" evidence="3">
    <location>
        <position position="1"/>
    </location>
</feature>
<feature type="non-terminal residue" evidence="3">
    <location>
        <position position="143"/>
    </location>
</feature>